<organism>
    <name type="scientific">Haloquadratum walsbyi (strain DSM 16790 / HBSQ001)</name>
    <dbReference type="NCBI Taxonomy" id="362976"/>
    <lineage>
        <taxon>Archaea</taxon>
        <taxon>Methanobacteriati</taxon>
        <taxon>Methanobacteriota</taxon>
        <taxon>Stenosarchaea group</taxon>
        <taxon>Halobacteria</taxon>
        <taxon>Halobacteriales</taxon>
        <taxon>Haloferacaceae</taxon>
        <taxon>Haloquadratum</taxon>
    </lineage>
</organism>
<keyword id="KW-1185">Reference proteome</keyword>
<keyword id="KW-0687">Ribonucleoprotein</keyword>
<keyword id="KW-0689">Ribosomal protein</keyword>
<keyword id="KW-0694">RNA-binding</keyword>
<keyword id="KW-0699">rRNA-binding</keyword>
<proteinExistence type="inferred from homology"/>
<accession>Q18EY0</accession>
<protein>
    <recommendedName>
        <fullName evidence="1">Small ribosomal subunit protein uS7</fullName>
    </recommendedName>
    <alternativeName>
        <fullName evidence="3">30S ribosomal protein S7</fullName>
    </alternativeName>
</protein>
<comment type="function">
    <text evidence="1">One of the primary rRNA binding proteins, it binds directly to 16S rRNA where it nucleates assembly of the head domain of the 30S subunit. Is located at the subunit interface close to the decoding center.</text>
</comment>
<comment type="subunit">
    <text evidence="1">Part of the 30S ribosomal subunit.</text>
</comment>
<comment type="similarity">
    <text evidence="1">Belongs to the universal ribosomal protein uS7 family.</text>
</comment>
<reference key="1">
    <citation type="journal article" date="2006" name="BMC Genomics">
        <title>The genome of the square archaeon Haloquadratum walsbyi: life at the limits of water activity.</title>
        <authorList>
            <person name="Bolhuis H."/>
            <person name="Palm P."/>
            <person name="Wende A."/>
            <person name="Falb M."/>
            <person name="Rampp M."/>
            <person name="Rodriguez-Valera F."/>
            <person name="Pfeiffer F."/>
            <person name="Oesterhelt D."/>
        </authorList>
    </citation>
    <scope>NUCLEOTIDE SEQUENCE [LARGE SCALE GENOMIC DNA]</scope>
    <source>
        <strain>DSM 16790 / HBSQ001</strain>
    </source>
</reference>
<name>RS7_HALWD</name>
<evidence type="ECO:0000255" key="1">
    <source>
        <dbReference type="HAMAP-Rule" id="MF_00480"/>
    </source>
</evidence>
<evidence type="ECO:0000256" key="2">
    <source>
        <dbReference type="SAM" id="MobiDB-lite"/>
    </source>
</evidence>
<evidence type="ECO:0000305" key="3"/>
<feature type="chain" id="PRO_0000344310" description="Small ribosomal subunit protein uS7">
    <location>
        <begin position="1"/>
        <end position="227"/>
    </location>
</feature>
<feature type="region of interest" description="Disordered" evidence="2">
    <location>
        <begin position="1"/>
        <end position="43"/>
    </location>
</feature>
<feature type="compositionally biased region" description="Acidic residues" evidence="2">
    <location>
        <begin position="1"/>
        <end position="12"/>
    </location>
</feature>
<feature type="compositionally biased region" description="Acidic residues" evidence="2">
    <location>
        <begin position="20"/>
        <end position="31"/>
    </location>
</feature>
<feature type="compositionally biased region" description="Low complexity" evidence="2">
    <location>
        <begin position="32"/>
        <end position="43"/>
    </location>
</feature>
<gene>
    <name evidence="1" type="primary">rps7</name>
    <name type="ordered locus">HQ_3390A</name>
</gene>
<dbReference type="EMBL" id="AM180088">
    <property type="protein sequence ID" value="CAJ53487.1"/>
    <property type="molecule type" value="Genomic_DNA"/>
</dbReference>
<dbReference type="RefSeq" id="WP_011572584.1">
    <property type="nucleotide sequence ID" value="NC_008212.1"/>
</dbReference>
<dbReference type="SMR" id="Q18EY0"/>
<dbReference type="STRING" id="362976.HQ_3390A"/>
<dbReference type="GeneID" id="4194666"/>
<dbReference type="KEGG" id="hwa:HQ_3390A"/>
<dbReference type="eggNOG" id="arCOG04254">
    <property type="taxonomic scope" value="Archaea"/>
</dbReference>
<dbReference type="HOGENOM" id="CLU_063975_0_0_2"/>
<dbReference type="Proteomes" id="UP000001975">
    <property type="component" value="Chromosome"/>
</dbReference>
<dbReference type="GO" id="GO:0015935">
    <property type="term" value="C:small ribosomal subunit"/>
    <property type="evidence" value="ECO:0007669"/>
    <property type="project" value="InterPro"/>
</dbReference>
<dbReference type="GO" id="GO:0019843">
    <property type="term" value="F:rRNA binding"/>
    <property type="evidence" value="ECO:0007669"/>
    <property type="project" value="UniProtKB-UniRule"/>
</dbReference>
<dbReference type="GO" id="GO:0003735">
    <property type="term" value="F:structural constituent of ribosome"/>
    <property type="evidence" value="ECO:0007669"/>
    <property type="project" value="InterPro"/>
</dbReference>
<dbReference type="GO" id="GO:0006412">
    <property type="term" value="P:translation"/>
    <property type="evidence" value="ECO:0007669"/>
    <property type="project" value="UniProtKB-UniRule"/>
</dbReference>
<dbReference type="CDD" id="cd14867">
    <property type="entry name" value="uS7_Eukaryote"/>
    <property type="match status" value="1"/>
</dbReference>
<dbReference type="Gene3D" id="1.10.455.10">
    <property type="entry name" value="Ribosomal protein S7 domain"/>
    <property type="match status" value="1"/>
</dbReference>
<dbReference type="HAMAP" id="MF_00480_A">
    <property type="entry name" value="Ribosomal_uS7_A"/>
    <property type="match status" value="1"/>
</dbReference>
<dbReference type="InterPro" id="IPR000235">
    <property type="entry name" value="Ribosomal_uS7"/>
</dbReference>
<dbReference type="InterPro" id="IPR026018">
    <property type="entry name" value="Ribosomal_uS7_arc"/>
</dbReference>
<dbReference type="InterPro" id="IPR023798">
    <property type="entry name" value="Ribosomal_uS7_dom"/>
</dbReference>
<dbReference type="InterPro" id="IPR036823">
    <property type="entry name" value="Ribosomal_uS7_dom_sf"/>
</dbReference>
<dbReference type="InterPro" id="IPR005716">
    <property type="entry name" value="Ribosomal_uS7_euk/arc"/>
</dbReference>
<dbReference type="NCBIfam" id="NF003106">
    <property type="entry name" value="PRK04027.1"/>
    <property type="match status" value="1"/>
</dbReference>
<dbReference type="NCBIfam" id="TIGR01028">
    <property type="entry name" value="uS7_euk_arch"/>
    <property type="match status" value="1"/>
</dbReference>
<dbReference type="PANTHER" id="PTHR11205">
    <property type="entry name" value="RIBOSOMAL PROTEIN S7"/>
    <property type="match status" value="1"/>
</dbReference>
<dbReference type="Pfam" id="PF00177">
    <property type="entry name" value="Ribosomal_S7"/>
    <property type="match status" value="1"/>
</dbReference>
<dbReference type="PIRSF" id="PIRSF002122">
    <property type="entry name" value="RPS7p_RPS7a_RPS5e_RPS7o"/>
    <property type="match status" value="1"/>
</dbReference>
<dbReference type="SUPFAM" id="SSF47973">
    <property type="entry name" value="Ribosomal protein S7"/>
    <property type="match status" value="1"/>
</dbReference>
<sequence>MSESDTDPDIDDDAHNNGDNDVDVAVDESESAETTTDTDTASANAKLFGEWDVSEIEYEDPSTQRYITVTPIAHTMGRHAAKQFEKSKISVVERLINRLMQTEDNTGHKQKTMNIVEDAFDTIHNRTEENPVQVLVRGVENAAPREETVRLKYGGISVPQAVDVAPQRRVDQALKFIADGTQRGSYKSAQSAADSLAQVIIGAANYDVQSYAVGQKEESERVAEAAR</sequence>